<protein>
    <recommendedName>
        <fullName evidence="1">Peptide deformylase</fullName>
        <shortName evidence="1">PDF</shortName>
        <ecNumber evidence="1">3.5.1.88</ecNumber>
    </recommendedName>
    <alternativeName>
        <fullName evidence="1">Polypeptide deformylase</fullName>
    </alternativeName>
</protein>
<accession>Q13F18</accession>
<sequence>MALREIIILPDKRLREISKPVAEVTPEIRKLADDMFESMYDAPGIGLAAIQIAEPVRLITMDIVRKEGNGKSDPRAFINPEIVGASAEMNVYEEGCLSIPEYYADVERPAVVRIRYTDLDGNVKEEDADGLFATCIQHEIDHLDGVLFVDHLSKLKRAMVVRKFEKAAKRGIKYV</sequence>
<evidence type="ECO:0000255" key="1">
    <source>
        <dbReference type="HAMAP-Rule" id="MF_00163"/>
    </source>
</evidence>
<proteinExistence type="inferred from homology"/>
<comment type="function">
    <text evidence="1">Removes the formyl group from the N-terminal Met of newly synthesized proteins. Requires at least a dipeptide for an efficient rate of reaction. N-terminal L-methionine is a prerequisite for activity but the enzyme has broad specificity at other positions.</text>
</comment>
<comment type="catalytic activity">
    <reaction evidence="1">
        <text>N-terminal N-formyl-L-methionyl-[peptide] + H2O = N-terminal L-methionyl-[peptide] + formate</text>
        <dbReference type="Rhea" id="RHEA:24420"/>
        <dbReference type="Rhea" id="RHEA-COMP:10639"/>
        <dbReference type="Rhea" id="RHEA-COMP:10640"/>
        <dbReference type="ChEBI" id="CHEBI:15377"/>
        <dbReference type="ChEBI" id="CHEBI:15740"/>
        <dbReference type="ChEBI" id="CHEBI:49298"/>
        <dbReference type="ChEBI" id="CHEBI:64731"/>
        <dbReference type="EC" id="3.5.1.88"/>
    </reaction>
</comment>
<comment type="cofactor">
    <cofactor evidence="1">
        <name>Fe(2+)</name>
        <dbReference type="ChEBI" id="CHEBI:29033"/>
    </cofactor>
    <text evidence="1">Binds 1 Fe(2+) ion.</text>
</comment>
<comment type="similarity">
    <text evidence="1">Belongs to the polypeptide deformylase family.</text>
</comment>
<reference key="1">
    <citation type="submission" date="2006-03" db="EMBL/GenBank/DDBJ databases">
        <title>Complete sequence of Rhodopseudomonas palustris BisB5.</title>
        <authorList>
            <consortium name="US DOE Joint Genome Institute"/>
            <person name="Copeland A."/>
            <person name="Lucas S."/>
            <person name="Lapidus A."/>
            <person name="Barry K."/>
            <person name="Detter J.C."/>
            <person name="Glavina del Rio T."/>
            <person name="Hammon N."/>
            <person name="Israni S."/>
            <person name="Dalin E."/>
            <person name="Tice H."/>
            <person name="Pitluck S."/>
            <person name="Chain P."/>
            <person name="Malfatti S."/>
            <person name="Shin M."/>
            <person name="Vergez L."/>
            <person name="Schmutz J."/>
            <person name="Larimer F."/>
            <person name="Land M."/>
            <person name="Hauser L."/>
            <person name="Pelletier D.A."/>
            <person name="Kyrpides N."/>
            <person name="Lykidis A."/>
            <person name="Oda Y."/>
            <person name="Harwood C.S."/>
            <person name="Richardson P."/>
        </authorList>
    </citation>
    <scope>NUCLEOTIDE SEQUENCE [LARGE SCALE GENOMIC DNA]</scope>
    <source>
        <strain>BisB5</strain>
    </source>
</reference>
<keyword id="KW-0378">Hydrolase</keyword>
<keyword id="KW-0408">Iron</keyword>
<keyword id="KW-0479">Metal-binding</keyword>
<keyword id="KW-0648">Protein biosynthesis</keyword>
<dbReference type="EC" id="3.5.1.88" evidence="1"/>
<dbReference type="EMBL" id="CP000283">
    <property type="protein sequence ID" value="ABE37321.1"/>
    <property type="molecule type" value="Genomic_DNA"/>
</dbReference>
<dbReference type="SMR" id="Q13F18"/>
<dbReference type="STRING" id="316057.RPD_0081"/>
<dbReference type="KEGG" id="rpd:RPD_0081"/>
<dbReference type="eggNOG" id="COG0242">
    <property type="taxonomic scope" value="Bacteria"/>
</dbReference>
<dbReference type="HOGENOM" id="CLU_061901_2_0_5"/>
<dbReference type="BioCyc" id="RPAL316057:RPD_RS00405-MONOMER"/>
<dbReference type="Proteomes" id="UP000001818">
    <property type="component" value="Chromosome"/>
</dbReference>
<dbReference type="GO" id="GO:0046872">
    <property type="term" value="F:metal ion binding"/>
    <property type="evidence" value="ECO:0007669"/>
    <property type="project" value="UniProtKB-KW"/>
</dbReference>
<dbReference type="GO" id="GO:0042586">
    <property type="term" value="F:peptide deformylase activity"/>
    <property type="evidence" value="ECO:0007669"/>
    <property type="project" value="UniProtKB-UniRule"/>
</dbReference>
<dbReference type="GO" id="GO:0043686">
    <property type="term" value="P:co-translational protein modification"/>
    <property type="evidence" value="ECO:0007669"/>
    <property type="project" value="TreeGrafter"/>
</dbReference>
<dbReference type="GO" id="GO:0006412">
    <property type="term" value="P:translation"/>
    <property type="evidence" value="ECO:0007669"/>
    <property type="project" value="UniProtKB-UniRule"/>
</dbReference>
<dbReference type="CDD" id="cd00487">
    <property type="entry name" value="Pep_deformylase"/>
    <property type="match status" value="1"/>
</dbReference>
<dbReference type="Gene3D" id="3.90.45.10">
    <property type="entry name" value="Peptide deformylase"/>
    <property type="match status" value="1"/>
</dbReference>
<dbReference type="HAMAP" id="MF_00163">
    <property type="entry name" value="Pep_deformylase"/>
    <property type="match status" value="1"/>
</dbReference>
<dbReference type="InterPro" id="IPR023635">
    <property type="entry name" value="Peptide_deformylase"/>
</dbReference>
<dbReference type="InterPro" id="IPR036821">
    <property type="entry name" value="Peptide_deformylase_sf"/>
</dbReference>
<dbReference type="NCBIfam" id="TIGR00079">
    <property type="entry name" value="pept_deformyl"/>
    <property type="match status" value="1"/>
</dbReference>
<dbReference type="NCBIfam" id="NF001159">
    <property type="entry name" value="PRK00150.1-3"/>
    <property type="match status" value="1"/>
</dbReference>
<dbReference type="PANTHER" id="PTHR10458">
    <property type="entry name" value="PEPTIDE DEFORMYLASE"/>
    <property type="match status" value="1"/>
</dbReference>
<dbReference type="PANTHER" id="PTHR10458:SF22">
    <property type="entry name" value="PEPTIDE DEFORMYLASE"/>
    <property type="match status" value="1"/>
</dbReference>
<dbReference type="Pfam" id="PF01327">
    <property type="entry name" value="Pep_deformylase"/>
    <property type="match status" value="1"/>
</dbReference>
<dbReference type="PIRSF" id="PIRSF004749">
    <property type="entry name" value="Pep_def"/>
    <property type="match status" value="1"/>
</dbReference>
<dbReference type="PRINTS" id="PR01576">
    <property type="entry name" value="PDEFORMYLASE"/>
</dbReference>
<dbReference type="SUPFAM" id="SSF56420">
    <property type="entry name" value="Peptide deformylase"/>
    <property type="match status" value="1"/>
</dbReference>
<organism>
    <name type="scientific">Rhodopseudomonas palustris (strain BisB5)</name>
    <dbReference type="NCBI Taxonomy" id="316057"/>
    <lineage>
        <taxon>Bacteria</taxon>
        <taxon>Pseudomonadati</taxon>
        <taxon>Pseudomonadota</taxon>
        <taxon>Alphaproteobacteria</taxon>
        <taxon>Hyphomicrobiales</taxon>
        <taxon>Nitrobacteraceae</taxon>
        <taxon>Rhodopseudomonas</taxon>
    </lineage>
</organism>
<feature type="chain" id="PRO_0000301089" description="Peptide deformylase">
    <location>
        <begin position="1"/>
        <end position="175"/>
    </location>
</feature>
<feature type="active site" evidence="1">
    <location>
        <position position="139"/>
    </location>
</feature>
<feature type="binding site" evidence="1">
    <location>
        <position position="96"/>
    </location>
    <ligand>
        <name>Fe cation</name>
        <dbReference type="ChEBI" id="CHEBI:24875"/>
    </ligand>
</feature>
<feature type="binding site" evidence="1">
    <location>
        <position position="138"/>
    </location>
    <ligand>
        <name>Fe cation</name>
        <dbReference type="ChEBI" id="CHEBI:24875"/>
    </ligand>
</feature>
<feature type="binding site" evidence="1">
    <location>
        <position position="142"/>
    </location>
    <ligand>
        <name>Fe cation</name>
        <dbReference type="ChEBI" id="CHEBI:24875"/>
    </ligand>
</feature>
<name>DEF_RHOPS</name>
<gene>
    <name evidence="1" type="primary">def</name>
    <name type="ordered locus">RPD_0081</name>
</gene>